<evidence type="ECO:0000255" key="1">
    <source>
        <dbReference type="HAMAP-Rule" id="MF_01864"/>
    </source>
</evidence>
<evidence type="ECO:0000255" key="2">
    <source>
        <dbReference type="PROSITE-ProRule" id="PRU01266"/>
    </source>
</evidence>
<name>MIAB_FRAP2</name>
<reference key="1">
    <citation type="submission" date="2007-12" db="EMBL/GenBank/DDBJ databases">
        <title>Complete sequence of chromosome of Francisella philomiragia subsp. philomiragia ATCC 25017.</title>
        <authorList>
            <consortium name="US DOE Joint Genome Institute"/>
            <person name="Copeland A."/>
            <person name="Lucas S."/>
            <person name="Lapidus A."/>
            <person name="Barry K."/>
            <person name="Detter J.C."/>
            <person name="Glavina del Rio T."/>
            <person name="Hammon N."/>
            <person name="Israni S."/>
            <person name="Dalin E."/>
            <person name="Tice H."/>
            <person name="Pitluck S."/>
            <person name="Chain P."/>
            <person name="Malfatti S."/>
            <person name="Shin M."/>
            <person name="Vergez L."/>
            <person name="Schmutz J."/>
            <person name="Larimer F."/>
            <person name="Land M."/>
            <person name="Hauser L."/>
            <person name="Richardson P."/>
        </authorList>
    </citation>
    <scope>NUCLEOTIDE SEQUENCE [LARGE SCALE GENOMIC DNA]</scope>
    <source>
        <strain>ATCC 25017 / CCUG 19701 / FSC 153 / O#319-036</strain>
    </source>
</reference>
<sequence length="442" mass="50191">MKEQKKVFIKTLGCQMNEYDSQKMHEVLDEHFHTVKTDDYKEADIILINTCSIREKAQEKVFHELGRWKNLKKKKEDLVIGVGGCVASQEGENIIKRAPFVDLVFGPQTIHRLPEMIKRKQSTQESQVDISFPEVEKFDFLPEPKAEGAKAYVSIMEGCDKYCSYCVVPYTRGPEVNRPFEDVLGECAALAEQGVKEITLLGQNVNHYLGPMENGETADLALLIHFIAEIDGIERIRFTTSHPVEFSQNLIDAYGSVPELANHLHLPVQHGSDRVLINMKRNHTILEFKQKIRKLRAIRPDITISSDFIVGFPGETEEDFQKLMDLVKDVNFDQSFSFIYSKRPGTPAADLPDDTPMEVKKDRLKRLQDLLNSNAQIISRQMVGTEQRILVEGTSKKDDNVLAGRTENNRIVNFIGDKSLIGQFAMVKITESLPNSLRGELI</sequence>
<organism>
    <name type="scientific">Francisella philomiragia subsp. philomiragia (strain ATCC 25017 / CCUG 19701 / FSC 153 / O#319-036)</name>
    <dbReference type="NCBI Taxonomy" id="484022"/>
    <lineage>
        <taxon>Bacteria</taxon>
        <taxon>Pseudomonadati</taxon>
        <taxon>Pseudomonadota</taxon>
        <taxon>Gammaproteobacteria</taxon>
        <taxon>Thiotrichales</taxon>
        <taxon>Francisellaceae</taxon>
        <taxon>Francisella</taxon>
    </lineage>
</organism>
<keyword id="KW-0004">4Fe-4S</keyword>
<keyword id="KW-0963">Cytoplasm</keyword>
<keyword id="KW-0408">Iron</keyword>
<keyword id="KW-0411">Iron-sulfur</keyword>
<keyword id="KW-0479">Metal-binding</keyword>
<keyword id="KW-0949">S-adenosyl-L-methionine</keyword>
<keyword id="KW-0808">Transferase</keyword>
<keyword id="KW-0819">tRNA processing</keyword>
<gene>
    <name evidence="1" type="primary">miaB</name>
    <name type="ordered locus">Fphi_0023</name>
</gene>
<feature type="chain" id="PRO_0000374302" description="tRNA-2-methylthio-N(6)-dimethylallyladenosine synthase">
    <location>
        <begin position="1"/>
        <end position="442"/>
    </location>
</feature>
<feature type="domain" description="MTTase N-terminal" evidence="1">
    <location>
        <begin position="5"/>
        <end position="122"/>
    </location>
</feature>
<feature type="domain" description="Radical SAM core" evidence="2">
    <location>
        <begin position="145"/>
        <end position="378"/>
    </location>
</feature>
<feature type="domain" description="TRAM" evidence="1">
    <location>
        <begin position="380"/>
        <end position="442"/>
    </location>
</feature>
<feature type="binding site" evidence="1">
    <location>
        <position position="14"/>
    </location>
    <ligand>
        <name>[4Fe-4S] cluster</name>
        <dbReference type="ChEBI" id="CHEBI:49883"/>
        <label>1</label>
    </ligand>
</feature>
<feature type="binding site" evidence="1">
    <location>
        <position position="51"/>
    </location>
    <ligand>
        <name>[4Fe-4S] cluster</name>
        <dbReference type="ChEBI" id="CHEBI:49883"/>
        <label>1</label>
    </ligand>
</feature>
<feature type="binding site" evidence="1">
    <location>
        <position position="85"/>
    </location>
    <ligand>
        <name>[4Fe-4S] cluster</name>
        <dbReference type="ChEBI" id="CHEBI:49883"/>
        <label>1</label>
    </ligand>
</feature>
<feature type="binding site" evidence="1">
    <location>
        <position position="159"/>
    </location>
    <ligand>
        <name>[4Fe-4S] cluster</name>
        <dbReference type="ChEBI" id="CHEBI:49883"/>
        <label>2</label>
        <note>4Fe-4S-S-AdoMet</note>
    </ligand>
</feature>
<feature type="binding site" evidence="1">
    <location>
        <position position="163"/>
    </location>
    <ligand>
        <name>[4Fe-4S] cluster</name>
        <dbReference type="ChEBI" id="CHEBI:49883"/>
        <label>2</label>
        <note>4Fe-4S-S-AdoMet</note>
    </ligand>
</feature>
<feature type="binding site" evidence="1">
    <location>
        <position position="166"/>
    </location>
    <ligand>
        <name>[4Fe-4S] cluster</name>
        <dbReference type="ChEBI" id="CHEBI:49883"/>
        <label>2</label>
        <note>4Fe-4S-S-AdoMet</note>
    </ligand>
</feature>
<protein>
    <recommendedName>
        <fullName evidence="1">tRNA-2-methylthio-N(6)-dimethylallyladenosine synthase</fullName>
        <ecNumber evidence="1">2.8.4.3</ecNumber>
    </recommendedName>
    <alternativeName>
        <fullName evidence="1">(Dimethylallyl)adenosine tRNA methylthiotransferase MiaB</fullName>
    </alternativeName>
    <alternativeName>
        <fullName evidence="1">tRNA-i(6)A37 methylthiotransferase</fullName>
    </alternativeName>
</protein>
<comment type="function">
    <text evidence="1">Catalyzes the methylthiolation of N6-(dimethylallyl)adenosine (i(6)A), leading to the formation of 2-methylthio-N6-(dimethylallyl)adenosine (ms(2)i(6)A) at position 37 in tRNAs that read codons beginning with uridine.</text>
</comment>
<comment type="catalytic activity">
    <reaction evidence="1">
        <text>N(6)-dimethylallyladenosine(37) in tRNA + (sulfur carrier)-SH + AH2 + 2 S-adenosyl-L-methionine = 2-methylsulfanyl-N(6)-dimethylallyladenosine(37) in tRNA + (sulfur carrier)-H + 5'-deoxyadenosine + L-methionine + A + S-adenosyl-L-homocysteine + 2 H(+)</text>
        <dbReference type="Rhea" id="RHEA:37067"/>
        <dbReference type="Rhea" id="RHEA-COMP:10375"/>
        <dbReference type="Rhea" id="RHEA-COMP:10376"/>
        <dbReference type="Rhea" id="RHEA-COMP:14737"/>
        <dbReference type="Rhea" id="RHEA-COMP:14739"/>
        <dbReference type="ChEBI" id="CHEBI:13193"/>
        <dbReference type="ChEBI" id="CHEBI:15378"/>
        <dbReference type="ChEBI" id="CHEBI:17319"/>
        <dbReference type="ChEBI" id="CHEBI:17499"/>
        <dbReference type="ChEBI" id="CHEBI:29917"/>
        <dbReference type="ChEBI" id="CHEBI:57844"/>
        <dbReference type="ChEBI" id="CHEBI:57856"/>
        <dbReference type="ChEBI" id="CHEBI:59789"/>
        <dbReference type="ChEBI" id="CHEBI:64428"/>
        <dbReference type="ChEBI" id="CHEBI:74415"/>
        <dbReference type="ChEBI" id="CHEBI:74417"/>
        <dbReference type="EC" id="2.8.4.3"/>
    </reaction>
</comment>
<comment type="cofactor">
    <cofactor evidence="1">
        <name>[4Fe-4S] cluster</name>
        <dbReference type="ChEBI" id="CHEBI:49883"/>
    </cofactor>
    <text evidence="1">Binds 2 [4Fe-4S] clusters. One cluster is coordinated with 3 cysteines and an exchangeable S-adenosyl-L-methionine.</text>
</comment>
<comment type="subunit">
    <text evidence="1">Monomer.</text>
</comment>
<comment type="subcellular location">
    <subcellularLocation>
        <location evidence="1">Cytoplasm</location>
    </subcellularLocation>
</comment>
<comment type="similarity">
    <text evidence="1">Belongs to the methylthiotransferase family. MiaB subfamily.</text>
</comment>
<accession>B0TXS4</accession>
<dbReference type="EC" id="2.8.4.3" evidence="1"/>
<dbReference type="EMBL" id="CP000937">
    <property type="protein sequence ID" value="ABZ86243.1"/>
    <property type="molecule type" value="Genomic_DNA"/>
</dbReference>
<dbReference type="SMR" id="B0TXS4"/>
<dbReference type="KEGG" id="fph:Fphi_0023"/>
<dbReference type="eggNOG" id="COG0621">
    <property type="taxonomic scope" value="Bacteria"/>
</dbReference>
<dbReference type="HOGENOM" id="CLU_018697_2_2_6"/>
<dbReference type="GO" id="GO:0005829">
    <property type="term" value="C:cytosol"/>
    <property type="evidence" value="ECO:0007669"/>
    <property type="project" value="TreeGrafter"/>
</dbReference>
<dbReference type="GO" id="GO:0051539">
    <property type="term" value="F:4 iron, 4 sulfur cluster binding"/>
    <property type="evidence" value="ECO:0007669"/>
    <property type="project" value="UniProtKB-UniRule"/>
</dbReference>
<dbReference type="GO" id="GO:0046872">
    <property type="term" value="F:metal ion binding"/>
    <property type="evidence" value="ECO:0007669"/>
    <property type="project" value="UniProtKB-KW"/>
</dbReference>
<dbReference type="GO" id="GO:0035597">
    <property type="term" value="F:N6-isopentenyladenosine methylthiotransferase activity"/>
    <property type="evidence" value="ECO:0007669"/>
    <property type="project" value="TreeGrafter"/>
</dbReference>
<dbReference type="CDD" id="cd01335">
    <property type="entry name" value="Radical_SAM"/>
    <property type="match status" value="1"/>
</dbReference>
<dbReference type="FunFam" id="3.40.50.12160:FF:000001">
    <property type="entry name" value="tRNA-2-methylthio-N(6)-dimethylallyladenosine synthase"/>
    <property type="match status" value="1"/>
</dbReference>
<dbReference type="FunFam" id="3.80.30.20:FF:000001">
    <property type="entry name" value="tRNA-2-methylthio-N(6)-dimethylallyladenosine synthase 2"/>
    <property type="match status" value="1"/>
</dbReference>
<dbReference type="Gene3D" id="3.40.50.12160">
    <property type="entry name" value="Methylthiotransferase, N-terminal domain"/>
    <property type="match status" value="1"/>
</dbReference>
<dbReference type="Gene3D" id="3.80.30.20">
    <property type="entry name" value="tm_1862 like domain"/>
    <property type="match status" value="1"/>
</dbReference>
<dbReference type="HAMAP" id="MF_01864">
    <property type="entry name" value="tRNA_metthiotr_MiaB"/>
    <property type="match status" value="1"/>
</dbReference>
<dbReference type="InterPro" id="IPR006638">
    <property type="entry name" value="Elp3/MiaA/NifB-like_rSAM"/>
</dbReference>
<dbReference type="InterPro" id="IPR005839">
    <property type="entry name" value="Methylthiotransferase"/>
</dbReference>
<dbReference type="InterPro" id="IPR020612">
    <property type="entry name" value="Methylthiotransferase_CS"/>
</dbReference>
<dbReference type="InterPro" id="IPR013848">
    <property type="entry name" value="Methylthiotransferase_N"/>
</dbReference>
<dbReference type="InterPro" id="IPR038135">
    <property type="entry name" value="Methylthiotransferase_N_sf"/>
</dbReference>
<dbReference type="InterPro" id="IPR006463">
    <property type="entry name" value="MiaB_methiolase"/>
</dbReference>
<dbReference type="InterPro" id="IPR007197">
    <property type="entry name" value="rSAM"/>
</dbReference>
<dbReference type="InterPro" id="IPR023404">
    <property type="entry name" value="rSAM_horseshoe"/>
</dbReference>
<dbReference type="InterPro" id="IPR002792">
    <property type="entry name" value="TRAM_dom"/>
</dbReference>
<dbReference type="NCBIfam" id="TIGR01574">
    <property type="entry name" value="miaB-methiolase"/>
    <property type="match status" value="1"/>
</dbReference>
<dbReference type="NCBIfam" id="TIGR00089">
    <property type="entry name" value="MiaB/RimO family radical SAM methylthiotransferase"/>
    <property type="match status" value="1"/>
</dbReference>
<dbReference type="PANTHER" id="PTHR43020">
    <property type="entry name" value="CDK5 REGULATORY SUBUNIT-ASSOCIATED PROTEIN 1"/>
    <property type="match status" value="1"/>
</dbReference>
<dbReference type="PANTHER" id="PTHR43020:SF2">
    <property type="entry name" value="MITOCHONDRIAL TRNA METHYLTHIOTRANSFERASE CDK5RAP1"/>
    <property type="match status" value="1"/>
</dbReference>
<dbReference type="Pfam" id="PF04055">
    <property type="entry name" value="Radical_SAM"/>
    <property type="match status" value="1"/>
</dbReference>
<dbReference type="Pfam" id="PF01938">
    <property type="entry name" value="TRAM"/>
    <property type="match status" value="1"/>
</dbReference>
<dbReference type="Pfam" id="PF00919">
    <property type="entry name" value="UPF0004"/>
    <property type="match status" value="1"/>
</dbReference>
<dbReference type="SFLD" id="SFLDF00273">
    <property type="entry name" value="(dimethylallyl)adenosine_tRNA"/>
    <property type="match status" value="1"/>
</dbReference>
<dbReference type="SFLD" id="SFLDG01082">
    <property type="entry name" value="B12-binding_domain_containing"/>
    <property type="match status" value="1"/>
</dbReference>
<dbReference type="SFLD" id="SFLDS00029">
    <property type="entry name" value="Radical_SAM"/>
    <property type="match status" value="1"/>
</dbReference>
<dbReference type="SMART" id="SM00729">
    <property type="entry name" value="Elp3"/>
    <property type="match status" value="1"/>
</dbReference>
<dbReference type="SUPFAM" id="SSF102114">
    <property type="entry name" value="Radical SAM enzymes"/>
    <property type="match status" value="1"/>
</dbReference>
<dbReference type="PROSITE" id="PS51449">
    <property type="entry name" value="MTTASE_N"/>
    <property type="match status" value="1"/>
</dbReference>
<dbReference type="PROSITE" id="PS01278">
    <property type="entry name" value="MTTASE_RADICAL"/>
    <property type="match status" value="1"/>
</dbReference>
<dbReference type="PROSITE" id="PS51918">
    <property type="entry name" value="RADICAL_SAM"/>
    <property type="match status" value="1"/>
</dbReference>
<dbReference type="PROSITE" id="PS50926">
    <property type="entry name" value="TRAM"/>
    <property type="match status" value="1"/>
</dbReference>
<proteinExistence type="inferred from homology"/>